<accession>Q9JVD1</accession>
<accession>A1IQU1</accession>
<organism>
    <name type="scientific">Neisseria meningitidis serogroup A / serotype 4A (strain DSM 15465 / Z2491)</name>
    <dbReference type="NCBI Taxonomy" id="122587"/>
    <lineage>
        <taxon>Bacteria</taxon>
        <taxon>Pseudomonadati</taxon>
        <taxon>Pseudomonadota</taxon>
        <taxon>Betaproteobacteria</taxon>
        <taxon>Neisseriales</taxon>
        <taxon>Neisseriaceae</taxon>
        <taxon>Neisseria</taxon>
    </lineage>
</organism>
<gene>
    <name evidence="1" type="primary">trpF</name>
    <name type="ordered locus">NMA0890</name>
</gene>
<evidence type="ECO:0000255" key="1">
    <source>
        <dbReference type="HAMAP-Rule" id="MF_00135"/>
    </source>
</evidence>
<dbReference type="EC" id="5.3.1.24" evidence="1"/>
<dbReference type="EMBL" id="AL157959">
    <property type="protein sequence ID" value="CAM08125.1"/>
    <property type="molecule type" value="Genomic_DNA"/>
</dbReference>
<dbReference type="PIR" id="E81935">
    <property type="entry name" value="E81935"/>
</dbReference>
<dbReference type="RefSeq" id="WP_002246057.1">
    <property type="nucleotide sequence ID" value="NC_003116.1"/>
</dbReference>
<dbReference type="SMR" id="Q9JVD1"/>
<dbReference type="EnsemblBacteria" id="CAM08125">
    <property type="protein sequence ID" value="CAM08125"/>
    <property type="gene ID" value="NMA0890"/>
</dbReference>
<dbReference type="KEGG" id="nma:NMA0890"/>
<dbReference type="HOGENOM" id="CLU_076364_2_0_4"/>
<dbReference type="UniPathway" id="UPA00035">
    <property type="reaction ID" value="UER00042"/>
</dbReference>
<dbReference type="Proteomes" id="UP000000626">
    <property type="component" value="Chromosome"/>
</dbReference>
<dbReference type="GO" id="GO:0004640">
    <property type="term" value="F:phosphoribosylanthranilate isomerase activity"/>
    <property type="evidence" value="ECO:0007669"/>
    <property type="project" value="UniProtKB-UniRule"/>
</dbReference>
<dbReference type="GO" id="GO:0000162">
    <property type="term" value="P:L-tryptophan biosynthetic process"/>
    <property type="evidence" value="ECO:0007669"/>
    <property type="project" value="UniProtKB-UniRule"/>
</dbReference>
<dbReference type="CDD" id="cd00405">
    <property type="entry name" value="PRAI"/>
    <property type="match status" value="1"/>
</dbReference>
<dbReference type="FunFam" id="3.20.20.70:FF:000075">
    <property type="entry name" value="Tryptophan biosynthesis protein TRP1"/>
    <property type="match status" value="1"/>
</dbReference>
<dbReference type="Gene3D" id="3.20.20.70">
    <property type="entry name" value="Aldolase class I"/>
    <property type="match status" value="1"/>
</dbReference>
<dbReference type="HAMAP" id="MF_00135">
    <property type="entry name" value="PRAI"/>
    <property type="match status" value="1"/>
</dbReference>
<dbReference type="InterPro" id="IPR013785">
    <property type="entry name" value="Aldolase_TIM"/>
</dbReference>
<dbReference type="InterPro" id="IPR001240">
    <property type="entry name" value="PRAI_dom"/>
</dbReference>
<dbReference type="InterPro" id="IPR011060">
    <property type="entry name" value="RibuloseP-bd_barrel"/>
</dbReference>
<dbReference type="InterPro" id="IPR044643">
    <property type="entry name" value="TrpF_fam"/>
</dbReference>
<dbReference type="NCBIfam" id="NF002298">
    <property type="entry name" value="PRK01222.1-4"/>
    <property type="match status" value="1"/>
</dbReference>
<dbReference type="PANTHER" id="PTHR42894">
    <property type="entry name" value="N-(5'-PHOSPHORIBOSYL)ANTHRANILATE ISOMERASE"/>
    <property type="match status" value="1"/>
</dbReference>
<dbReference type="PANTHER" id="PTHR42894:SF1">
    <property type="entry name" value="N-(5'-PHOSPHORIBOSYL)ANTHRANILATE ISOMERASE"/>
    <property type="match status" value="1"/>
</dbReference>
<dbReference type="Pfam" id="PF00697">
    <property type="entry name" value="PRAI"/>
    <property type="match status" value="1"/>
</dbReference>
<dbReference type="SUPFAM" id="SSF51366">
    <property type="entry name" value="Ribulose-phoshate binding barrel"/>
    <property type="match status" value="1"/>
</dbReference>
<comment type="catalytic activity">
    <reaction evidence="1">
        <text>N-(5-phospho-beta-D-ribosyl)anthranilate = 1-(2-carboxyphenylamino)-1-deoxy-D-ribulose 5-phosphate</text>
        <dbReference type="Rhea" id="RHEA:21540"/>
        <dbReference type="ChEBI" id="CHEBI:18277"/>
        <dbReference type="ChEBI" id="CHEBI:58613"/>
        <dbReference type="EC" id="5.3.1.24"/>
    </reaction>
</comment>
<comment type="pathway">
    <text evidence="1">Amino-acid biosynthesis; L-tryptophan biosynthesis; L-tryptophan from chorismate: step 3/5.</text>
</comment>
<comment type="similarity">
    <text evidence="1">Belongs to the TrpF family.</text>
</comment>
<proteinExistence type="inferred from homology"/>
<reference key="1">
    <citation type="journal article" date="2000" name="Nature">
        <title>Complete DNA sequence of a serogroup A strain of Neisseria meningitidis Z2491.</title>
        <authorList>
            <person name="Parkhill J."/>
            <person name="Achtman M."/>
            <person name="James K.D."/>
            <person name="Bentley S.D."/>
            <person name="Churcher C.M."/>
            <person name="Klee S.R."/>
            <person name="Morelli G."/>
            <person name="Basham D."/>
            <person name="Brown D."/>
            <person name="Chillingworth T."/>
            <person name="Davies R.M."/>
            <person name="Davis P."/>
            <person name="Devlin K."/>
            <person name="Feltwell T."/>
            <person name="Hamlin N."/>
            <person name="Holroyd S."/>
            <person name="Jagels K."/>
            <person name="Leather S."/>
            <person name="Moule S."/>
            <person name="Mungall K.L."/>
            <person name="Quail M.A."/>
            <person name="Rajandream M.A."/>
            <person name="Rutherford K.M."/>
            <person name="Simmonds M."/>
            <person name="Skelton J."/>
            <person name="Whitehead S."/>
            <person name="Spratt B.G."/>
            <person name="Barrell B.G."/>
        </authorList>
    </citation>
    <scope>NUCLEOTIDE SEQUENCE [LARGE SCALE GENOMIC DNA]</scope>
    <source>
        <strain>DSM 15465 / Z2491</strain>
    </source>
</reference>
<keyword id="KW-0028">Amino-acid biosynthesis</keyword>
<keyword id="KW-0057">Aromatic amino acid biosynthesis</keyword>
<keyword id="KW-0413">Isomerase</keyword>
<keyword id="KW-0822">Tryptophan biosynthesis</keyword>
<protein>
    <recommendedName>
        <fullName evidence="1">N-(5'-phosphoribosyl)anthranilate isomerase</fullName>
        <shortName evidence="1">PRAI</shortName>
        <ecNumber evidence="1">5.3.1.24</ecNumber>
    </recommendedName>
</protein>
<name>TRPF_NEIMA</name>
<sequence>MRKIRTKICGITTPEDALYAAHAGADALGLVFYPQSPRAVDIIKAQKITAALPPFVSVVALFVNESAQNIRRILAEVPIHIIQFHGDEDDAFCRQFHRPYIKAIRVQTASDIRNAADRFPDAQALLFDAYHPSEYGGTGHRFDWTLLAEYSGKPWVLAGGLTPENVDEAIRITGAEAVDVSGGVEASKGKKDPAKVAAFIATANRLSR</sequence>
<feature type="chain" id="PRO_0000154366" description="N-(5'-phosphoribosyl)anthranilate isomerase">
    <location>
        <begin position="1"/>
        <end position="208"/>
    </location>
</feature>